<evidence type="ECO:0000255" key="1">
    <source>
        <dbReference type="HAMAP-Rule" id="MF_00679"/>
    </source>
</evidence>
<reference key="1">
    <citation type="journal article" date="2011" name="J. Bacteriol.">
        <title>Comparative genomics of 28 Salmonella enterica isolates: evidence for CRISPR-mediated adaptive sublineage evolution.</title>
        <authorList>
            <person name="Fricke W.F."/>
            <person name="Mammel M.K."/>
            <person name="McDermott P.F."/>
            <person name="Tartera C."/>
            <person name="White D.G."/>
            <person name="Leclerc J.E."/>
            <person name="Ravel J."/>
            <person name="Cebula T.A."/>
        </authorList>
    </citation>
    <scope>NUCLEOTIDE SEQUENCE [LARGE SCALE GENOMIC DNA]</scope>
    <source>
        <strain>CVM19633</strain>
    </source>
</reference>
<comment type="function">
    <text evidence="1">Chaperone involved in the maturation of iron-sulfur cluster-containing proteins. Has a low intrinsic ATPase activity which is markedly stimulated by HscB. Involved in the maturation of IscU.</text>
</comment>
<comment type="similarity">
    <text evidence="1">Belongs to the heat shock protein 70 family.</text>
</comment>
<keyword id="KW-0067">ATP-binding</keyword>
<keyword id="KW-0143">Chaperone</keyword>
<keyword id="KW-0547">Nucleotide-binding</keyword>
<sequence length="616" mass="65637">MALLQISEPGLSAAPHQRRLAAGIDLGTTNSLVATVRSGQAETLPDHEGRHLLPSVVHYQQQGHTVGYAARDNAAQDTANTISSVKRMMGRSLADIQARYPHLPYRFKASVNGLPMIDTAAGLLNPVRVSADILKALAARASESLSGELDGVVITVPAYFDDAQRQGTKDAARLAGLHVLRLLNEPTAAAIAYGLDSGKEGVIAVYDLGGGTFDISILRLSRGVFEVLATGGDSALGGDDFDHLLADYIREQAGIADRSDNRVQRELLDAAIAAKIALSDADTVRVNVAGWQGEITREQFNDLISALVKRTLLACRRALKDAGVDPQDVLEVVMVGGSTRVPLVRERVGEFFGRTPLTAIDPDKVVAIGAAIQADILVGNKPDSEMLLLDVIPLSLGLETMGGLVEKVIPRNTTIPVARAQDFTTFKDGQTAMSIHVMQGERELVQDCRSLARFALRGIPPLPAGGAHIRVTFQVDADGLLSVTAMEKSTGVEASIQVKPSYGLTDSEIASMIKDSMSFAEQDVKARMLAEQKVEAARVLESLTGALTADAALLSAAERQCIDDAAAHLSAVAQGDDVDAIEQAIKNVDKQTQEFAARRMDQSVRRALKGHSVDEV</sequence>
<name>HSCA_SALSV</name>
<feature type="chain" id="PRO_1000131693" description="Chaperone protein HscA">
    <location>
        <begin position="1"/>
        <end position="616"/>
    </location>
</feature>
<proteinExistence type="inferred from homology"/>
<accession>B4TRB1</accession>
<dbReference type="EMBL" id="CP001127">
    <property type="protein sequence ID" value="ACF91003.1"/>
    <property type="molecule type" value="Genomic_DNA"/>
</dbReference>
<dbReference type="RefSeq" id="WP_001196652.1">
    <property type="nucleotide sequence ID" value="NC_011094.1"/>
</dbReference>
<dbReference type="SMR" id="B4TRB1"/>
<dbReference type="KEGG" id="sew:SeSA_A2779"/>
<dbReference type="HOGENOM" id="CLU_005965_2_1_6"/>
<dbReference type="Proteomes" id="UP000001865">
    <property type="component" value="Chromosome"/>
</dbReference>
<dbReference type="GO" id="GO:0005524">
    <property type="term" value="F:ATP binding"/>
    <property type="evidence" value="ECO:0007669"/>
    <property type="project" value="UniProtKB-KW"/>
</dbReference>
<dbReference type="GO" id="GO:0016887">
    <property type="term" value="F:ATP hydrolysis activity"/>
    <property type="evidence" value="ECO:0007669"/>
    <property type="project" value="UniProtKB-UniRule"/>
</dbReference>
<dbReference type="GO" id="GO:0140662">
    <property type="term" value="F:ATP-dependent protein folding chaperone"/>
    <property type="evidence" value="ECO:0007669"/>
    <property type="project" value="InterPro"/>
</dbReference>
<dbReference type="GO" id="GO:0051082">
    <property type="term" value="F:unfolded protein binding"/>
    <property type="evidence" value="ECO:0007669"/>
    <property type="project" value="InterPro"/>
</dbReference>
<dbReference type="GO" id="GO:0016226">
    <property type="term" value="P:iron-sulfur cluster assembly"/>
    <property type="evidence" value="ECO:0007669"/>
    <property type="project" value="InterPro"/>
</dbReference>
<dbReference type="CDD" id="cd10236">
    <property type="entry name" value="ASKHA_NBD_HSP70_HscA"/>
    <property type="match status" value="1"/>
</dbReference>
<dbReference type="FunFam" id="1.20.1270.10:FF:000006">
    <property type="entry name" value="Chaperone protein HscA"/>
    <property type="match status" value="1"/>
</dbReference>
<dbReference type="FunFam" id="3.30.420.40:FF:000046">
    <property type="entry name" value="Chaperone protein HscA"/>
    <property type="match status" value="1"/>
</dbReference>
<dbReference type="FunFam" id="3.90.640.10:FF:000013">
    <property type="entry name" value="Chaperone protein HscA"/>
    <property type="match status" value="1"/>
</dbReference>
<dbReference type="FunFam" id="2.60.34.10:FF:000005">
    <property type="entry name" value="Chaperone protein HscA homolog"/>
    <property type="match status" value="1"/>
</dbReference>
<dbReference type="Gene3D" id="1.20.1270.10">
    <property type="match status" value="1"/>
</dbReference>
<dbReference type="Gene3D" id="3.30.420.40">
    <property type="match status" value="2"/>
</dbReference>
<dbReference type="Gene3D" id="3.90.640.10">
    <property type="entry name" value="Actin, Chain A, domain 4"/>
    <property type="match status" value="1"/>
</dbReference>
<dbReference type="Gene3D" id="2.60.34.10">
    <property type="entry name" value="Substrate Binding Domain Of DNAk, Chain A, domain 1"/>
    <property type="match status" value="1"/>
</dbReference>
<dbReference type="HAMAP" id="MF_00679">
    <property type="entry name" value="HscA"/>
    <property type="match status" value="1"/>
</dbReference>
<dbReference type="InterPro" id="IPR043129">
    <property type="entry name" value="ATPase_NBD"/>
</dbReference>
<dbReference type="InterPro" id="IPR018181">
    <property type="entry name" value="Heat_shock_70_CS"/>
</dbReference>
<dbReference type="InterPro" id="IPR042039">
    <property type="entry name" value="HscA_NBD"/>
</dbReference>
<dbReference type="InterPro" id="IPR029048">
    <property type="entry name" value="HSP70_C_sf"/>
</dbReference>
<dbReference type="InterPro" id="IPR029047">
    <property type="entry name" value="HSP70_peptide-bd_sf"/>
</dbReference>
<dbReference type="InterPro" id="IPR013126">
    <property type="entry name" value="Hsp_70_fam"/>
</dbReference>
<dbReference type="InterPro" id="IPR010236">
    <property type="entry name" value="ISC_FeS_clus_asmbl_HscA"/>
</dbReference>
<dbReference type="NCBIfam" id="TIGR01991">
    <property type="entry name" value="HscA"/>
    <property type="match status" value="1"/>
</dbReference>
<dbReference type="NCBIfam" id="NF003520">
    <property type="entry name" value="PRK05183.1"/>
    <property type="match status" value="1"/>
</dbReference>
<dbReference type="PANTHER" id="PTHR19375">
    <property type="entry name" value="HEAT SHOCK PROTEIN 70KDA"/>
    <property type="match status" value="1"/>
</dbReference>
<dbReference type="Pfam" id="PF00012">
    <property type="entry name" value="HSP70"/>
    <property type="match status" value="1"/>
</dbReference>
<dbReference type="PRINTS" id="PR00301">
    <property type="entry name" value="HEATSHOCK70"/>
</dbReference>
<dbReference type="SUPFAM" id="SSF53067">
    <property type="entry name" value="Actin-like ATPase domain"/>
    <property type="match status" value="2"/>
</dbReference>
<dbReference type="SUPFAM" id="SSF100934">
    <property type="entry name" value="Heat shock protein 70kD (HSP70), C-terminal subdomain"/>
    <property type="match status" value="1"/>
</dbReference>
<dbReference type="SUPFAM" id="SSF100920">
    <property type="entry name" value="Heat shock protein 70kD (HSP70), peptide-binding domain"/>
    <property type="match status" value="1"/>
</dbReference>
<dbReference type="PROSITE" id="PS00297">
    <property type="entry name" value="HSP70_1"/>
    <property type="match status" value="1"/>
</dbReference>
<dbReference type="PROSITE" id="PS00329">
    <property type="entry name" value="HSP70_2"/>
    <property type="match status" value="1"/>
</dbReference>
<dbReference type="PROSITE" id="PS01036">
    <property type="entry name" value="HSP70_3"/>
    <property type="match status" value="1"/>
</dbReference>
<organism>
    <name type="scientific">Salmonella schwarzengrund (strain CVM19633)</name>
    <dbReference type="NCBI Taxonomy" id="439843"/>
    <lineage>
        <taxon>Bacteria</taxon>
        <taxon>Pseudomonadati</taxon>
        <taxon>Pseudomonadota</taxon>
        <taxon>Gammaproteobacteria</taxon>
        <taxon>Enterobacterales</taxon>
        <taxon>Enterobacteriaceae</taxon>
        <taxon>Salmonella</taxon>
    </lineage>
</organism>
<protein>
    <recommendedName>
        <fullName evidence="1">Chaperone protein HscA</fullName>
    </recommendedName>
    <alternativeName>
        <fullName evidence="1">Hsc66</fullName>
    </alternativeName>
</protein>
<gene>
    <name evidence="1" type="primary">hscA</name>
    <name type="ordered locus">SeSA_A2779</name>
</gene>